<organism>
    <name type="scientific">Borreliella burgdorferi (strain ZS7)</name>
    <name type="common">Borrelia burgdorferi</name>
    <dbReference type="NCBI Taxonomy" id="445985"/>
    <lineage>
        <taxon>Bacteria</taxon>
        <taxon>Pseudomonadati</taxon>
        <taxon>Spirochaetota</taxon>
        <taxon>Spirochaetia</taxon>
        <taxon>Spirochaetales</taxon>
        <taxon>Borreliaceae</taxon>
        <taxon>Borreliella</taxon>
    </lineage>
</organism>
<evidence type="ECO:0000255" key="1">
    <source>
        <dbReference type="HAMAP-Rule" id="MF_01318"/>
    </source>
</evidence>
<evidence type="ECO:0000305" key="2"/>
<gene>
    <name evidence="1" type="primary">rplA</name>
    <name type="ordered locus">BbuZS7_0394</name>
</gene>
<feature type="chain" id="PRO_1000141364" description="Large ribosomal subunit protein uL1">
    <location>
        <begin position="1"/>
        <end position="226"/>
    </location>
</feature>
<proteinExistence type="inferred from homology"/>
<accession>B7J1W4</accession>
<sequence length="226" mass="25642">MSKKGKKYIEAFSKVDKNKFYNIEDAILLLKEIKFAKFDETIDISINLNLKKNHTVRDTIVLPNQFMKPKRILVFAKGDRADEARAFGATHVGDDDLINKIKSGWDEFDVVVATPDMMKDVGRLGPILGKRGLMPNPKTQTVTNNLKDAINSLKKGRTEFRANKNGVISFSFGKSSMDNEKIKENYEEFVKEVVKKRPSDLKGAFIDSIYISSTMGPSIKVNFVWR</sequence>
<name>RL1_BORBZ</name>
<keyword id="KW-0678">Repressor</keyword>
<keyword id="KW-0687">Ribonucleoprotein</keyword>
<keyword id="KW-0689">Ribosomal protein</keyword>
<keyword id="KW-0694">RNA-binding</keyword>
<keyword id="KW-0699">rRNA-binding</keyword>
<keyword id="KW-0810">Translation regulation</keyword>
<keyword id="KW-0820">tRNA-binding</keyword>
<reference key="1">
    <citation type="journal article" date="2011" name="J. Bacteriol.">
        <title>Whole-genome sequences of thirteen isolates of Borrelia burgdorferi.</title>
        <authorList>
            <person name="Schutzer S.E."/>
            <person name="Fraser-Liggett C.M."/>
            <person name="Casjens S.R."/>
            <person name="Qiu W.G."/>
            <person name="Dunn J.J."/>
            <person name="Mongodin E.F."/>
            <person name="Luft B.J."/>
        </authorList>
    </citation>
    <scope>NUCLEOTIDE SEQUENCE [LARGE SCALE GENOMIC DNA]</scope>
    <source>
        <strain>ZS7</strain>
    </source>
</reference>
<protein>
    <recommendedName>
        <fullName evidence="1">Large ribosomal subunit protein uL1</fullName>
    </recommendedName>
    <alternativeName>
        <fullName evidence="2">50S ribosomal protein L1</fullName>
    </alternativeName>
</protein>
<comment type="function">
    <text evidence="1">Binds directly to 23S rRNA. The L1 stalk is quite mobile in the ribosome, and is involved in E site tRNA release.</text>
</comment>
<comment type="function">
    <text evidence="1">Protein L1 is also a translational repressor protein, it controls the translation of the L11 operon by binding to its mRNA.</text>
</comment>
<comment type="subunit">
    <text evidence="1">Part of the 50S ribosomal subunit.</text>
</comment>
<comment type="similarity">
    <text evidence="1">Belongs to the universal ribosomal protein uL1 family.</text>
</comment>
<dbReference type="EMBL" id="CP001205">
    <property type="protein sequence ID" value="ACK74902.1"/>
    <property type="molecule type" value="Genomic_DNA"/>
</dbReference>
<dbReference type="RefSeq" id="WP_002657851.1">
    <property type="nucleotide sequence ID" value="NC_011728.1"/>
</dbReference>
<dbReference type="SMR" id="B7J1W4"/>
<dbReference type="GeneID" id="56567820"/>
<dbReference type="KEGG" id="bbz:BbuZS7_0394"/>
<dbReference type="HOGENOM" id="CLU_062853_0_0_12"/>
<dbReference type="Proteomes" id="UP000006901">
    <property type="component" value="Chromosome"/>
</dbReference>
<dbReference type="GO" id="GO:0015934">
    <property type="term" value="C:large ribosomal subunit"/>
    <property type="evidence" value="ECO:0007669"/>
    <property type="project" value="InterPro"/>
</dbReference>
<dbReference type="GO" id="GO:0019843">
    <property type="term" value="F:rRNA binding"/>
    <property type="evidence" value="ECO:0007669"/>
    <property type="project" value="UniProtKB-UniRule"/>
</dbReference>
<dbReference type="GO" id="GO:0003735">
    <property type="term" value="F:structural constituent of ribosome"/>
    <property type="evidence" value="ECO:0007669"/>
    <property type="project" value="InterPro"/>
</dbReference>
<dbReference type="GO" id="GO:0000049">
    <property type="term" value="F:tRNA binding"/>
    <property type="evidence" value="ECO:0007669"/>
    <property type="project" value="UniProtKB-KW"/>
</dbReference>
<dbReference type="GO" id="GO:0006417">
    <property type="term" value="P:regulation of translation"/>
    <property type="evidence" value="ECO:0007669"/>
    <property type="project" value="UniProtKB-KW"/>
</dbReference>
<dbReference type="GO" id="GO:0006412">
    <property type="term" value="P:translation"/>
    <property type="evidence" value="ECO:0007669"/>
    <property type="project" value="UniProtKB-UniRule"/>
</dbReference>
<dbReference type="CDD" id="cd00403">
    <property type="entry name" value="Ribosomal_L1"/>
    <property type="match status" value="1"/>
</dbReference>
<dbReference type="FunFam" id="3.40.50.790:FF:000001">
    <property type="entry name" value="50S ribosomal protein L1"/>
    <property type="match status" value="1"/>
</dbReference>
<dbReference type="Gene3D" id="3.30.190.20">
    <property type="match status" value="1"/>
</dbReference>
<dbReference type="Gene3D" id="3.40.50.790">
    <property type="match status" value="1"/>
</dbReference>
<dbReference type="HAMAP" id="MF_01318_B">
    <property type="entry name" value="Ribosomal_uL1_B"/>
    <property type="match status" value="1"/>
</dbReference>
<dbReference type="InterPro" id="IPR005878">
    <property type="entry name" value="Ribosom_uL1_bac-type"/>
</dbReference>
<dbReference type="InterPro" id="IPR002143">
    <property type="entry name" value="Ribosomal_uL1"/>
</dbReference>
<dbReference type="InterPro" id="IPR023674">
    <property type="entry name" value="Ribosomal_uL1-like"/>
</dbReference>
<dbReference type="InterPro" id="IPR028364">
    <property type="entry name" value="Ribosomal_uL1/biogenesis"/>
</dbReference>
<dbReference type="InterPro" id="IPR016095">
    <property type="entry name" value="Ribosomal_uL1_3-a/b-sand"/>
</dbReference>
<dbReference type="InterPro" id="IPR023673">
    <property type="entry name" value="Ribosomal_uL1_CS"/>
</dbReference>
<dbReference type="NCBIfam" id="TIGR01169">
    <property type="entry name" value="rplA_bact"/>
    <property type="match status" value="1"/>
</dbReference>
<dbReference type="PANTHER" id="PTHR36427">
    <property type="entry name" value="54S RIBOSOMAL PROTEIN L1, MITOCHONDRIAL"/>
    <property type="match status" value="1"/>
</dbReference>
<dbReference type="PANTHER" id="PTHR36427:SF3">
    <property type="entry name" value="LARGE RIBOSOMAL SUBUNIT PROTEIN UL1M"/>
    <property type="match status" value="1"/>
</dbReference>
<dbReference type="Pfam" id="PF00687">
    <property type="entry name" value="Ribosomal_L1"/>
    <property type="match status" value="1"/>
</dbReference>
<dbReference type="PIRSF" id="PIRSF002155">
    <property type="entry name" value="Ribosomal_L1"/>
    <property type="match status" value="1"/>
</dbReference>
<dbReference type="SUPFAM" id="SSF56808">
    <property type="entry name" value="Ribosomal protein L1"/>
    <property type="match status" value="1"/>
</dbReference>
<dbReference type="PROSITE" id="PS01199">
    <property type="entry name" value="RIBOSOMAL_L1"/>
    <property type="match status" value="1"/>
</dbReference>